<feature type="chain" id="PRO_0000422592" description="N-acetylgalactosamine-N,N'-diacetylbacillosaminyl-diphospho-undecaprenol 4-alpha-N-acetylgalactosaminyltransferase">
    <location>
        <begin position="1"/>
        <end position="365"/>
    </location>
</feature>
<gene>
    <name type="primary">pglJ</name>
    <name type="ordered locus">Cj1127c</name>
</gene>
<reference key="1">
    <citation type="journal article" date="2000" name="Nature">
        <title>The genome sequence of the food-borne pathogen Campylobacter jejuni reveals hypervariable sequences.</title>
        <authorList>
            <person name="Parkhill J."/>
            <person name="Wren B.W."/>
            <person name="Mungall K.L."/>
            <person name="Ketley J.M."/>
            <person name="Churcher C.M."/>
            <person name="Basham D."/>
            <person name="Chillingworth T."/>
            <person name="Davies R.M."/>
            <person name="Feltwell T."/>
            <person name="Holroyd S."/>
            <person name="Jagels K."/>
            <person name="Karlyshev A.V."/>
            <person name="Moule S."/>
            <person name="Pallen M.J."/>
            <person name="Penn C.W."/>
            <person name="Quail M.A."/>
            <person name="Rajandream M.A."/>
            <person name="Rutherford K.M."/>
            <person name="van Vliet A.H.M."/>
            <person name="Whitehead S."/>
            <person name="Barrell B.G."/>
        </authorList>
    </citation>
    <scope>NUCLEOTIDE SEQUENCE [LARGE SCALE GENOMIC DNA]</scope>
    <source>
        <strain>ATCC 700819 / NCTC 11168</strain>
    </source>
</reference>
<reference key="2">
    <citation type="journal article" date="2005" name="Proc. Natl. Acad. Sci. U.S.A.">
        <title>In vitro assembly of the undecaprenylpyrophosphate-linked heptasaccharide for prokaryotic N-linked glycosylation.</title>
        <authorList>
            <person name="Glover K.J."/>
            <person name="Weerapana E."/>
            <person name="Imperiali B."/>
        </authorList>
    </citation>
    <scope>FUNCTION</scope>
    <scope>CATALYTIC ACTIVITY</scope>
    <scope>PATHWAY</scope>
    <source>
        <strain>ATCC 700819 / NCTC 11168</strain>
    </source>
</reference>
<reference key="3">
    <citation type="journal article" date="2007" name="Biochemistry">
        <title>Polyisoprenol specificity in the Campylobacter jejuni N-linked glycosylation pathway.</title>
        <authorList>
            <person name="Chen M.M."/>
            <person name="Weerapana E."/>
            <person name="Ciepichal E."/>
            <person name="Stupak J."/>
            <person name="Reid C.W."/>
            <person name="Swiezewska E."/>
            <person name="Imperiali B."/>
        </authorList>
    </citation>
    <scope>FUNCTION</scope>
    <scope>SUBCELLULAR LOCATION</scope>
    <source>
        <strain>ATCC 700819 / NCTC 11168</strain>
    </source>
</reference>
<organism>
    <name type="scientific">Campylobacter jejuni subsp. jejuni serotype O:2 (strain ATCC 700819 / NCTC 11168)</name>
    <dbReference type="NCBI Taxonomy" id="192222"/>
    <lineage>
        <taxon>Bacteria</taxon>
        <taxon>Pseudomonadati</taxon>
        <taxon>Campylobacterota</taxon>
        <taxon>Epsilonproteobacteria</taxon>
        <taxon>Campylobacterales</taxon>
        <taxon>Campylobacteraceae</taxon>
        <taxon>Campylobacter</taxon>
    </lineage>
</organism>
<dbReference type="EC" id="2.4.1.291"/>
<dbReference type="EMBL" id="AL111168">
    <property type="protein sequence ID" value="CAL35244.1"/>
    <property type="molecule type" value="Genomic_DNA"/>
</dbReference>
<dbReference type="PIR" id="B81317">
    <property type="entry name" value="B81317"/>
</dbReference>
<dbReference type="RefSeq" id="WP_002852870.1">
    <property type="nucleotide sequence ID" value="NZ_SZUC01000001.1"/>
</dbReference>
<dbReference type="RefSeq" id="YP_002344520.1">
    <property type="nucleotide sequence ID" value="NC_002163.1"/>
</dbReference>
<dbReference type="SMR" id="Q0P9C7"/>
<dbReference type="STRING" id="192222.Cj1127c"/>
<dbReference type="CAZy" id="GT4">
    <property type="family name" value="Glycosyltransferase Family 4"/>
</dbReference>
<dbReference type="PaxDb" id="192222-Cj1127c"/>
<dbReference type="DNASU" id="905418"/>
<dbReference type="EnsemblBacteria" id="CAL35244">
    <property type="protein sequence ID" value="CAL35244"/>
    <property type="gene ID" value="Cj1127c"/>
</dbReference>
<dbReference type="GeneID" id="905418"/>
<dbReference type="KEGG" id="cje:Cj1127c"/>
<dbReference type="PATRIC" id="fig|192222.6.peg.1109"/>
<dbReference type="eggNOG" id="COG0438">
    <property type="taxonomic scope" value="Bacteria"/>
</dbReference>
<dbReference type="HOGENOM" id="CLU_009583_0_0_7"/>
<dbReference type="OrthoDB" id="1522162at2"/>
<dbReference type="BioCyc" id="MetaCyc:MONOMER-17332"/>
<dbReference type="UniPathway" id="UPA00378"/>
<dbReference type="Proteomes" id="UP000000799">
    <property type="component" value="Chromosome"/>
</dbReference>
<dbReference type="GO" id="GO:0005886">
    <property type="term" value="C:plasma membrane"/>
    <property type="evidence" value="ECO:0007669"/>
    <property type="project" value="UniProtKB-SubCell"/>
</dbReference>
<dbReference type="GO" id="GO:0016758">
    <property type="term" value="F:hexosyltransferase activity"/>
    <property type="evidence" value="ECO:0000314"/>
    <property type="project" value="UniProtKB"/>
</dbReference>
<dbReference type="GO" id="GO:0009103">
    <property type="term" value="P:lipopolysaccharide biosynthetic process"/>
    <property type="evidence" value="ECO:0007669"/>
    <property type="project" value="TreeGrafter"/>
</dbReference>
<dbReference type="GO" id="GO:0018279">
    <property type="term" value="P:protein N-linked glycosylation via asparagine"/>
    <property type="evidence" value="ECO:0000314"/>
    <property type="project" value="UniProtKB"/>
</dbReference>
<dbReference type="CDD" id="cd03811">
    <property type="entry name" value="GT4_GT28_WabH-like"/>
    <property type="match status" value="1"/>
</dbReference>
<dbReference type="FunFam" id="3.40.50.2000:FF:000365">
    <property type="entry name" value="Glycosyl transferase"/>
    <property type="match status" value="1"/>
</dbReference>
<dbReference type="Gene3D" id="3.40.50.2000">
    <property type="entry name" value="Glycogen Phosphorylase B"/>
    <property type="match status" value="2"/>
</dbReference>
<dbReference type="InterPro" id="IPR001296">
    <property type="entry name" value="Glyco_trans_1"/>
</dbReference>
<dbReference type="InterPro" id="IPR028098">
    <property type="entry name" value="Glyco_trans_4-like_N"/>
</dbReference>
<dbReference type="PANTHER" id="PTHR46401">
    <property type="entry name" value="GLYCOSYLTRANSFERASE WBBK-RELATED"/>
    <property type="match status" value="1"/>
</dbReference>
<dbReference type="PANTHER" id="PTHR46401:SF2">
    <property type="entry name" value="GLYCOSYLTRANSFERASE WBBK-RELATED"/>
    <property type="match status" value="1"/>
</dbReference>
<dbReference type="Pfam" id="PF13439">
    <property type="entry name" value="Glyco_transf_4"/>
    <property type="match status" value="1"/>
</dbReference>
<dbReference type="Pfam" id="PF00534">
    <property type="entry name" value="Glycos_transf_1"/>
    <property type="match status" value="1"/>
</dbReference>
<dbReference type="SUPFAM" id="SSF53756">
    <property type="entry name" value="UDP-Glycosyltransferase/glycogen phosphorylase"/>
    <property type="match status" value="1"/>
</dbReference>
<evidence type="ECO:0000269" key="1">
    <source>
    </source>
</evidence>
<evidence type="ECO:0000269" key="2">
    <source>
    </source>
</evidence>
<evidence type="ECO:0000305" key="3"/>
<evidence type="ECO:0000305" key="4">
    <source>
    </source>
</evidence>
<evidence type="ECO:0000305" key="5">
    <source>
    </source>
</evidence>
<keyword id="KW-0997">Cell inner membrane</keyword>
<keyword id="KW-1003">Cell membrane</keyword>
<keyword id="KW-0328">Glycosyltransferase</keyword>
<keyword id="KW-0472">Membrane</keyword>
<keyword id="KW-1185">Reference proteome</keyword>
<keyword id="KW-0808">Transferase</keyword>
<protein>
    <recommendedName>
        <fullName>N-acetylgalactosamine-N,N'-diacetylbacillosaminyl-diphospho-undecaprenol 4-alpha-N-acetylgalactosaminyltransferase</fullName>
        <ecNumber>2.4.1.291</ecNumber>
    </recommendedName>
    <alternativeName>
        <fullName>Protein glycosylation J</fullName>
    </alternativeName>
</protein>
<comment type="function">
    <text evidence="1 2">Adds a GalNAc residue on to the Und-PP-Bac2,4diNAc-GalNAc disaccharide in the N-linked protein glycosylation pathway. Transfers the third sugar in the heptasaccharide biosynthesis.</text>
</comment>
<comment type="catalytic activity">
    <reaction evidence="1">
        <text>N-acetyl-alpha-D-galactosaminyl-(1-&gt;3)-N,N'-diacetyl-alpha-D-bacillosaminyl-tri-trans,hepta-cis-undecaprenyl diphosphate + UDP-N-acetyl-alpha-D-galactosamine = N-acetyl-alpha-D-galactosaminyl-(1-&gt;4)-N-acetyl-alpha-D-galactosaminyl-(1-&gt;3)-N,N'-diacetyl-alpha-D-bacillosaminyl-tri-trans,heptacis-undecaprenyl diphosphate + UDP + H(+)</text>
        <dbReference type="Rhea" id="RHEA:34543"/>
        <dbReference type="ChEBI" id="CHEBI:15378"/>
        <dbReference type="ChEBI" id="CHEBI:58223"/>
        <dbReference type="ChEBI" id="CHEBI:67138"/>
        <dbReference type="ChEBI" id="CHEBI:68651"/>
        <dbReference type="ChEBI" id="CHEBI:68652"/>
        <dbReference type="EC" id="2.4.1.291"/>
    </reaction>
</comment>
<comment type="pathway">
    <text evidence="1">Protein modification; protein glycosylation.</text>
</comment>
<comment type="subcellular location">
    <subcellularLocation>
        <location evidence="5">Cell inner membrane</location>
        <topology evidence="5">Peripheral membrane protein</topology>
    </subcellularLocation>
</comment>
<comment type="miscellaneous">
    <text evidence="4">N-linked protein glycosylation in C.jejuni consists in the transfer of a heptasaccharide (GalNAc-alpha1,4-GalNAc-alpha1,4-(Glcbeta1,3)-GalNAc-alpha1,4-GalNAc-alpha1,4-GalNAc-alpha1,3-bacillosamine) from a membrane-anchored undecaprenylpyrophosphate (Und-PP)-linked donor to the Asn side chain of proteins at the Asn-X-Ser/Thr motif.</text>
</comment>
<comment type="similarity">
    <text evidence="3">Belongs to the glycosyltransferase group 1 family.</text>
</comment>
<name>PGLJ_CAMJE</name>
<proteinExistence type="evidence at protein level"/>
<accession>Q0P9C7</accession>
<sequence>MQKLGIFIYSLGSGGAERVVATLLPILSLKFEVHLILMNDKISYEIPECQIHFLECSKPSENPILKFLKLPFLALKYKKLCRNLGIDTEFVFLNRPNYIALMARMFGNKTRLVINECTTPSVMYMKNNFNSLVNKFLISLLYPKADLILPNSKGNLEDLVQNFSISPKKCEILYNAIDLENIGQKALEDIALKDKFILSVGRLDKGKNHALLIRAYARLKTDLKLVILGEGVLKDELLALIKELNLEEKVLLLGFDNNPYKYMAKCEFFAFASVFEGFSNVLIESLACSCAVVCTDHKSGARELFGDDEFGLLVEVDNENSMFQGLKTMLEDDKLRKAYKNKAKTRAKAFDKVKIARDALKYLLG</sequence>